<keyword id="KW-1217">Cell adhesion impairing toxin</keyword>
<keyword id="KW-0903">Direct protein sequencing</keyword>
<keyword id="KW-1015">Disulfide bond</keyword>
<keyword id="KW-1199">Hemostasis impairing toxin</keyword>
<keyword id="KW-1201">Platelet aggregation inhibiting toxin</keyword>
<keyword id="KW-0964">Secreted</keyword>
<keyword id="KW-0800">Toxin</keyword>
<proteinExistence type="evidence at protein level"/>
<name>VARIA_DERVA</name>
<evidence type="ECO:0000269" key="1">
    <source>
    </source>
</evidence>
<evidence type="ECO:0000303" key="2">
    <source>
    </source>
</evidence>
<evidence type="ECO:0000305" key="3"/>
<evidence type="ECO:0000305" key="4">
    <source>
    </source>
</evidence>
<reference key="1">
    <citation type="journal article" date="1996" name="J. Biol. Chem.">
        <title>Variabilin, a novel RGD-containing antagonist of glycoprotein IIb-IIIa and platelet aggregation inhibitor from the hard tick Dermacentor variabilis.</title>
        <authorList>
            <person name="Wang X."/>
            <person name="Coons L.B."/>
            <person name="Taylor D.B."/>
            <person name="Stevens S.E. Jr."/>
            <person name="Gartner T.K."/>
        </authorList>
    </citation>
    <scope>PROTEIN SEQUENCE</scope>
    <scope>FUNCTION</scope>
    <scope>MASS SPECTROMETRY</scope>
    <source>
        <tissue>Salivary gland</tissue>
    </source>
</reference>
<comment type="function">
    <text evidence="1">Potently inhibits platelet aggregation induced by ADP (IC(50)=157 nM, complete inhibition at 514 nM). Also inhibits platelet aggregation induced by collagen and by the thrombin receptor peptide SFLLRNP. Is a potent antagonist of the fibrinogen receptor glycoprotein IIb-IIIa (ITGA2B/ITGB3) and the vitronectin receptor alpha-v/beta-3 (ITGAV/ITGB3).</text>
</comment>
<comment type="subcellular location">
    <subcellularLocation>
        <location evidence="4">Secreted</location>
    </subcellularLocation>
</comment>
<comment type="tissue specificity">
    <text evidence="4">Expressed in salivary glands.</text>
</comment>
<comment type="PTM">
    <text evidence="3">Contains 2 disulfide bonds.</text>
</comment>
<comment type="mass spectrometry" mass="4985.5" method="MALDI" evidence="1"/>
<dbReference type="GO" id="GO:0005576">
    <property type="term" value="C:extracellular region"/>
    <property type="evidence" value="ECO:0007669"/>
    <property type="project" value="UniProtKB-SubCell"/>
</dbReference>
<dbReference type="GO" id="GO:0090729">
    <property type="term" value="F:toxin activity"/>
    <property type="evidence" value="ECO:0007669"/>
    <property type="project" value="UniProtKB-KW"/>
</dbReference>
<protein>
    <recommendedName>
        <fullName evidence="2">Variabilin</fullName>
    </recommendedName>
    <alternativeName>
        <fullName evidence="2">Anti-platelet agent</fullName>
    </alternativeName>
    <alternativeName>
        <fullName evidence="3">Platelet aggregation inhibitor</fullName>
        <shortName evidence="3">PAI</shortName>
    </alternativeName>
</protein>
<sequence length="47" mass="4973">NTFSDENPGFPCDCTSADAKRACGIQCACWPRGDTPGGGRRIIDGQQ</sequence>
<feature type="chain" id="PRO_0000455821" description="Variabilin" evidence="1">
    <location>
        <begin position="1"/>
        <end position="47"/>
    </location>
</feature>
<feature type="short sequence motif" description="Cell attachment site">
    <location>
        <begin position="32"/>
        <end position="34"/>
    </location>
</feature>
<organism>
    <name type="scientific">Dermacentor variabilis</name>
    <name type="common">American dog tick</name>
    <dbReference type="NCBI Taxonomy" id="34621"/>
    <lineage>
        <taxon>Eukaryota</taxon>
        <taxon>Metazoa</taxon>
        <taxon>Ecdysozoa</taxon>
        <taxon>Arthropoda</taxon>
        <taxon>Chelicerata</taxon>
        <taxon>Arachnida</taxon>
        <taxon>Acari</taxon>
        <taxon>Parasitiformes</taxon>
        <taxon>Ixodida</taxon>
        <taxon>Ixodoidea</taxon>
        <taxon>Ixodidae</taxon>
        <taxon>Rhipicephalinae</taxon>
        <taxon>Dermacentor</taxon>
    </lineage>
</organism>
<accession>P0DV97</accession>